<feature type="chain" id="PRO_1000069087" description="UPF0370 protein YE1145">
    <location>
        <begin position="1"/>
        <end position="64"/>
    </location>
</feature>
<feature type="transmembrane region" description="Helical" evidence="1">
    <location>
        <begin position="3"/>
        <end position="23"/>
    </location>
</feature>
<feature type="region of interest" description="Disordered" evidence="2">
    <location>
        <begin position="36"/>
        <end position="64"/>
    </location>
</feature>
<comment type="subcellular location">
    <subcellularLocation>
        <location evidence="1">Cell membrane</location>
        <topology evidence="1">Single-pass membrane protein</topology>
    </subcellularLocation>
</comment>
<comment type="similarity">
    <text evidence="1">Belongs to the UPF0370 family.</text>
</comment>
<sequence>MHWLADYWWVVLIILVGMILNGIKELRRLDHKKFLSNKPEIPPHRDNNAQWDDDDDWPDKDKKK</sequence>
<accession>A1JL14</accession>
<organism>
    <name type="scientific">Yersinia enterocolitica serotype O:8 / biotype 1B (strain NCTC 13174 / 8081)</name>
    <dbReference type="NCBI Taxonomy" id="393305"/>
    <lineage>
        <taxon>Bacteria</taxon>
        <taxon>Pseudomonadati</taxon>
        <taxon>Pseudomonadota</taxon>
        <taxon>Gammaproteobacteria</taxon>
        <taxon>Enterobacterales</taxon>
        <taxon>Yersiniaceae</taxon>
        <taxon>Yersinia</taxon>
    </lineage>
</organism>
<gene>
    <name type="ordered locus">YE1145</name>
</gene>
<protein>
    <recommendedName>
        <fullName evidence="1">UPF0370 protein YE1145</fullName>
    </recommendedName>
</protein>
<dbReference type="EMBL" id="AM286415">
    <property type="protein sequence ID" value="CAL11239.1"/>
    <property type="molecule type" value="Genomic_DNA"/>
</dbReference>
<dbReference type="RefSeq" id="WP_005172354.1">
    <property type="nucleotide sequence ID" value="NC_008800.1"/>
</dbReference>
<dbReference type="RefSeq" id="YP_001005472.1">
    <property type="nucleotide sequence ID" value="NC_008800.1"/>
</dbReference>
<dbReference type="SMR" id="A1JL14"/>
<dbReference type="KEGG" id="yen:YE1145"/>
<dbReference type="PATRIC" id="fig|393305.7.peg.1247"/>
<dbReference type="eggNOG" id="ENOG5032YJI">
    <property type="taxonomic scope" value="Bacteria"/>
</dbReference>
<dbReference type="HOGENOM" id="CLU_198936_0_0_6"/>
<dbReference type="OrthoDB" id="6522148at2"/>
<dbReference type="Proteomes" id="UP000000642">
    <property type="component" value="Chromosome"/>
</dbReference>
<dbReference type="GO" id="GO:0005886">
    <property type="term" value="C:plasma membrane"/>
    <property type="evidence" value="ECO:0007669"/>
    <property type="project" value="UniProtKB-SubCell"/>
</dbReference>
<dbReference type="HAMAP" id="MF_01566">
    <property type="entry name" value="UPF0370"/>
    <property type="match status" value="1"/>
</dbReference>
<dbReference type="InterPro" id="IPR020910">
    <property type="entry name" value="UPF0370"/>
</dbReference>
<dbReference type="NCBIfam" id="NF010185">
    <property type="entry name" value="PRK13664.1"/>
    <property type="match status" value="1"/>
</dbReference>
<dbReference type="Pfam" id="PF13980">
    <property type="entry name" value="UPF0370"/>
    <property type="match status" value="1"/>
</dbReference>
<proteinExistence type="inferred from homology"/>
<keyword id="KW-1003">Cell membrane</keyword>
<keyword id="KW-0472">Membrane</keyword>
<keyword id="KW-0812">Transmembrane</keyword>
<keyword id="KW-1133">Transmembrane helix</keyword>
<evidence type="ECO:0000255" key="1">
    <source>
        <dbReference type="HAMAP-Rule" id="MF_01566"/>
    </source>
</evidence>
<evidence type="ECO:0000256" key="2">
    <source>
        <dbReference type="SAM" id="MobiDB-lite"/>
    </source>
</evidence>
<name>Y1145_YERE8</name>
<reference key="1">
    <citation type="journal article" date="2006" name="PLoS Genet.">
        <title>The complete genome sequence and comparative genome analysis of the high pathogenicity Yersinia enterocolitica strain 8081.</title>
        <authorList>
            <person name="Thomson N.R."/>
            <person name="Howard S."/>
            <person name="Wren B.W."/>
            <person name="Holden M.T.G."/>
            <person name="Crossman L."/>
            <person name="Challis G.L."/>
            <person name="Churcher C."/>
            <person name="Mungall K."/>
            <person name="Brooks K."/>
            <person name="Chillingworth T."/>
            <person name="Feltwell T."/>
            <person name="Abdellah Z."/>
            <person name="Hauser H."/>
            <person name="Jagels K."/>
            <person name="Maddison M."/>
            <person name="Moule S."/>
            <person name="Sanders M."/>
            <person name="Whitehead S."/>
            <person name="Quail M.A."/>
            <person name="Dougan G."/>
            <person name="Parkhill J."/>
            <person name="Prentice M.B."/>
        </authorList>
    </citation>
    <scope>NUCLEOTIDE SEQUENCE [LARGE SCALE GENOMIC DNA]</scope>
    <source>
        <strain>NCTC 13174 / 8081</strain>
    </source>
</reference>